<protein>
    <recommendedName>
        <fullName evidence="1">Macrolide export ATP-binding/permease protein MacB</fullName>
        <ecNumber evidence="1">7.6.2.-</ecNumber>
    </recommendedName>
</protein>
<geneLocation type="plasmid">
    <name>AT</name>
</geneLocation>
<keyword id="KW-0046">Antibiotic resistance</keyword>
<keyword id="KW-0067">ATP-binding</keyword>
<keyword id="KW-0997">Cell inner membrane</keyword>
<keyword id="KW-1003">Cell membrane</keyword>
<keyword id="KW-0472">Membrane</keyword>
<keyword id="KW-0547">Nucleotide-binding</keyword>
<keyword id="KW-0614">Plasmid</keyword>
<keyword id="KW-1185">Reference proteome</keyword>
<keyword id="KW-1278">Translocase</keyword>
<keyword id="KW-0812">Transmembrane</keyword>
<keyword id="KW-1133">Transmembrane helix</keyword>
<keyword id="KW-0813">Transport</keyword>
<proteinExistence type="inferred from homology"/>
<gene>
    <name evidence="1" type="primary">macB</name>
    <name type="ordered locus">Atu5178</name>
    <name type="ORF">AGR_pAT_247</name>
</gene>
<organism>
    <name type="scientific">Agrobacterium fabrum (strain C58 / ATCC 33970)</name>
    <name type="common">Agrobacterium tumefaciens (strain C58)</name>
    <dbReference type="NCBI Taxonomy" id="176299"/>
    <lineage>
        <taxon>Bacteria</taxon>
        <taxon>Pseudomonadati</taxon>
        <taxon>Pseudomonadota</taxon>
        <taxon>Alphaproteobacteria</taxon>
        <taxon>Hyphomicrobiales</taxon>
        <taxon>Rhizobiaceae</taxon>
        <taxon>Rhizobium/Agrobacterium group</taxon>
        <taxon>Agrobacterium</taxon>
        <taxon>Agrobacterium tumefaciens complex</taxon>
    </lineage>
</organism>
<accession>Q8UKE4</accession>
<accession>Q7D3Q7</accession>
<reference key="1">
    <citation type="journal article" date="2001" name="Science">
        <title>The genome of the natural genetic engineer Agrobacterium tumefaciens C58.</title>
        <authorList>
            <person name="Wood D.W."/>
            <person name="Setubal J.C."/>
            <person name="Kaul R."/>
            <person name="Monks D.E."/>
            <person name="Kitajima J.P."/>
            <person name="Okura V.K."/>
            <person name="Zhou Y."/>
            <person name="Chen L."/>
            <person name="Wood G.E."/>
            <person name="Almeida N.F. Jr."/>
            <person name="Woo L."/>
            <person name="Chen Y."/>
            <person name="Paulsen I.T."/>
            <person name="Eisen J.A."/>
            <person name="Karp P.D."/>
            <person name="Bovee D. Sr."/>
            <person name="Chapman P."/>
            <person name="Clendenning J."/>
            <person name="Deatherage G."/>
            <person name="Gillet W."/>
            <person name="Grant C."/>
            <person name="Kutyavin T."/>
            <person name="Levy R."/>
            <person name="Li M.-J."/>
            <person name="McClelland E."/>
            <person name="Palmieri A."/>
            <person name="Raymond C."/>
            <person name="Rouse G."/>
            <person name="Saenphimmachak C."/>
            <person name="Wu Z."/>
            <person name="Romero P."/>
            <person name="Gordon D."/>
            <person name="Zhang S."/>
            <person name="Yoo H."/>
            <person name="Tao Y."/>
            <person name="Biddle P."/>
            <person name="Jung M."/>
            <person name="Krespan W."/>
            <person name="Perry M."/>
            <person name="Gordon-Kamm B."/>
            <person name="Liao L."/>
            <person name="Kim S."/>
            <person name="Hendrick C."/>
            <person name="Zhao Z.-Y."/>
            <person name="Dolan M."/>
            <person name="Chumley F."/>
            <person name="Tingey S.V."/>
            <person name="Tomb J.-F."/>
            <person name="Gordon M.P."/>
            <person name="Olson M.V."/>
            <person name="Nester E.W."/>
        </authorList>
    </citation>
    <scope>NUCLEOTIDE SEQUENCE [LARGE SCALE GENOMIC DNA]</scope>
</reference>
<reference key="2">
    <citation type="journal article" date="2001" name="Science">
        <title>Genome sequence of the plant pathogen and biotechnology agent Agrobacterium tumefaciens C58.</title>
        <authorList>
            <person name="Goodner B."/>
            <person name="Hinkle G."/>
            <person name="Gattung S."/>
            <person name="Miller N."/>
            <person name="Blanchard M."/>
            <person name="Qurollo B."/>
            <person name="Goldman B.S."/>
            <person name="Cao Y."/>
            <person name="Askenazi M."/>
            <person name="Halling C."/>
            <person name="Mullin L."/>
            <person name="Houmiel K."/>
            <person name="Gordon J."/>
            <person name="Vaudin M."/>
            <person name="Iartchouk O."/>
            <person name="Epp A."/>
            <person name="Liu F."/>
            <person name="Wollam C."/>
            <person name="Allinger M."/>
            <person name="Doughty D."/>
            <person name="Scott C."/>
            <person name="Lappas C."/>
            <person name="Markelz B."/>
            <person name="Flanagan C."/>
            <person name="Crowell C."/>
            <person name="Gurson J."/>
            <person name="Lomo C."/>
            <person name="Sear C."/>
            <person name="Strub G."/>
            <person name="Cielo C."/>
            <person name="Slater S."/>
        </authorList>
    </citation>
    <scope>NUCLEOTIDE SEQUENCE [LARGE SCALE GENOMIC DNA]</scope>
    <source>
        <strain>C58 / ATCC 33970</strain>
    </source>
</reference>
<comment type="function">
    <text evidence="1">Non-canonical ABC transporter that contains transmembrane domains (TMD), which form a pore in the inner membrane, and an ATP-binding domain (NBD), which is responsible for energy generation. Confers resistance against macrolides.</text>
</comment>
<comment type="subunit">
    <text evidence="1">Homodimer.</text>
</comment>
<comment type="subcellular location">
    <subcellularLocation>
        <location evidence="1">Cell inner membrane</location>
        <topology evidence="1">Multi-pass membrane protein</topology>
    </subcellularLocation>
</comment>
<comment type="similarity">
    <text evidence="1">Belongs to the ABC transporter superfamily. Macrolide exporter (TC 3.A.1.122) family.</text>
</comment>
<dbReference type="EC" id="7.6.2.-" evidence="1"/>
<dbReference type="EMBL" id="AE007872">
    <property type="protein sequence ID" value="AAK90549.1"/>
    <property type="molecule type" value="Genomic_DNA"/>
</dbReference>
<dbReference type="PIR" id="AF3181">
    <property type="entry name" value="AF3181"/>
</dbReference>
<dbReference type="RefSeq" id="NP_396108.1">
    <property type="nucleotide sequence ID" value="NC_003064.2"/>
</dbReference>
<dbReference type="RefSeq" id="WP_010974437.1">
    <property type="nucleotide sequence ID" value="NC_003064.2"/>
</dbReference>
<dbReference type="SMR" id="Q8UKE4"/>
<dbReference type="EnsemblBacteria" id="AAK90549">
    <property type="protein sequence ID" value="AAK90549"/>
    <property type="gene ID" value="Atu5178"/>
</dbReference>
<dbReference type="GeneID" id="1136951"/>
<dbReference type="KEGG" id="atu:Atu5178"/>
<dbReference type="PATRIC" id="fig|176299.10.peg.4856"/>
<dbReference type="eggNOG" id="COG0577">
    <property type="taxonomic scope" value="Bacteria"/>
</dbReference>
<dbReference type="eggNOG" id="COG1136">
    <property type="taxonomic scope" value="Bacteria"/>
</dbReference>
<dbReference type="HOGENOM" id="CLU_000604_78_1_5"/>
<dbReference type="OrthoDB" id="9770036at2"/>
<dbReference type="PhylomeDB" id="Q8UKE4"/>
<dbReference type="BioCyc" id="AGRO:ATU5178-MONOMER"/>
<dbReference type="Proteomes" id="UP000000813">
    <property type="component" value="Plasmid At"/>
</dbReference>
<dbReference type="GO" id="GO:0005886">
    <property type="term" value="C:plasma membrane"/>
    <property type="evidence" value="ECO:0007669"/>
    <property type="project" value="UniProtKB-SubCell"/>
</dbReference>
<dbReference type="GO" id="GO:0005524">
    <property type="term" value="F:ATP binding"/>
    <property type="evidence" value="ECO:0007669"/>
    <property type="project" value="UniProtKB-KW"/>
</dbReference>
<dbReference type="GO" id="GO:0016887">
    <property type="term" value="F:ATP hydrolysis activity"/>
    <property type="evidence" value="ECO:0007669"/>
    <property type="project" value="InterPro"/>
</dbReference>
<dbReference type="GO" id="GO:0022857">
    <property type="term" value="F:transmembrane transporter activity"/>
    <property type="evidence" value="ECO:0007669"/>
    <property type="project" value="TreeGrafter"/>
</dbReference>
<dbReference type="GO" id="GO:0046677">
    <property type="term" value="P:response to antibiotic"/>
    <property type="evidence" value="ECO:0007669"/>
    <property type="project" value="UniProtKB-KW"/>
</dbReference>
<dbReference type="CDD" id="cd03255">
    <property type="entry name" value="ABC_MJ0796_LolCDE_FtsE"/>
    <property type="match status" value="1"/>
</dbReference>
<dbReference type="FunFam" id="3.40.50.300:FF:000032">
    <property type="entry name" value="Export ABC transporter ATP-binding protein"/>
    <property type="match status" value="1"/>
</dbReference>
<dbReference type="Gene3D" id="3.40.50.300">
    <property type="entry name" value="P-loop containing nucleotide triphosphate hydrolases"/>
    <property type="match status" value="1"/>
</dbReference>
<dbReference type="InterPro" id="IPR003593">
    <property type="entry name" value="AAA+_ATPase"/>
</dbReference>
<dbReference type="InterPro" id="IPR003838">
    <property type="entry name" value="ABC3_permease_C"/>
</dbReference>
<dbReference type="InterPro" id="IPR003439">
    <property type="entry name" value="ABC_transporter-like_ATP-bd"/>
</dbReference>
<dbReference type="InterPro" id="IPR017871">
    <property type="entry name" value="ABC_transporter-like_CS"/>
</dbReference>
<dbReference type="InterPro" id="IPR017911">
    <property type="entry name" value="MacB-like_ATP-bd"/>
</dbReference>
<dbReference type="InterPro" id="IPR025857">
    <property type="entry name" value="MacB_PCD"/>
</dbReference>
<dbReference type="InterPro" id="IPR050250">
    <property type="entry name" value="Macrolide_Exporter_MacB"/>
</dbReference>
<dbReference type="InterPro" id="IPR027417">
    <property type="entry name" value="P-loop_NTPase"/>
</dbReference>
<dbReference type="PANTHER" id="PTHR30572:SF14">
    <property type="entry name" value="MACROLIDE EXPORT ATP-BINDING_PERMEASE PROTEIN MACB"/>
    <property type="match status" value="1"/>
</dbReference>
<dbReference type="PANTHER" id="PTHR30572">
    <property type="entry name" value="MEMBRANE COMPONENT OF TRANSPORTER-RELATED"/>
    <property type="match status" value="1"/>
</dbReference>
<dbReference type="Pfam" id="PF00005">
    <property type="entry name" value="ABC_tran"/>
    <property type="match status" value="1"/>
</dbReference>
<dbReference type="Pfam" id="PF02687">
    <property type="entry name" value="FtsX"/>
    <property type="match status" value="1"/>
</dbReference>
<dbReference type="Pfam" id="PF12704">
    <property type="entry name" value="MacB_PCD"/>
    <property type="match status" value="1"/>
</dbReference>
<dbReference type="SMART" id="SM00382">
    <property type="entry name" value="AAA"/>
    <property type="match status" value="1"/>
</dbReference>
<dbReference type="SUPFAM" id="SSF52540">
    <property type="entry name" value="P-loop containing nucleoside triphosphate hydrolases"/>
    <property type="match status" value="1"/>
</dbReference>
<dbReference type="PROSITE" id="PS00211">
    <property type="entry name" value="ABC_TRANSPORTER_1"/>
    <property type="match status" value="1"/>
</dbReference>
<dbReference type="PROSITE" id="PS50893">
    <property type="entry name" value="ABC_TRANSPORTER_2"/>
    <property type="match status" value="1"/>
</dbReference>
<dbReference type="PROSITE" id="PS51267">
    <property type="entry name" value="MACB"/>
    <property type="match status" value="1"/>
</dbReference>
<evidence type="ECO:0000255" key="1">
    <source>
        <dbReference type="HAMAP-Rule" id="MF_01720"/>
    </source>
</evidence>
<name>MACB_AGRFC</name>
<feature type="chain" id="PRO_0000269918" description="Macrolide export ATP-binding/permease protein MacB">
    <location>
        <begin position="1"/>
        <end position="648"/>
    </location>
</feature>
<feature type="transmembrane region" description="Helical" evidence="1">
    <location>
        <begin position="273"/>
        <end position="293"/>
    </location>
</feature>
<feature type="transmembrane region" description="Helical" evidence="1">
    <location>
        <begin position="528"/>
        <end position="548"/>
    </location>
</feature>
<feature type="transmembrane region" description="Helical" evidence="1">
    <location>
        <begin position="572"/>
        <end position="592"/>
    </location>
</feature>
<feature type="transmembrane region" description="Helical" evidence="1">
    <location>
        <begin position="613"/>
        <end position="633"/>
    </location>
</feature>
<feature type="domain" description="ABC transporter" evidence="1">
    <location>
        <begin position="6"/>
        <end position="251"/>
    </location>
</feature>
<feature type="binding site" evidence="1">
    <location>
        <begin position="42"/>
        <end position="49"/>
    </location>
    <ligand>
        <name>ATP</name>
        <dbReference type="ChEBI" id="CHEBI:30616"/>
    </ligand>
</feature>
<sequence>MTEPLIRVRGVSRAFPAGDEMVRVLKDVDLDIEAGEMMAIIGASGSGKSTLMNILGCLDRPTTGSYWIEGRETSKMAVDELAALRRERFGFIFQRYHLLGDLSAASNVEVPAIYAGRSRSDRHKRAISLLTRLGLAERTGNIPSKLSGGQQQRVSIARALMNGGEIILADEPTGALDTHSGAEVMKILRELHAEGHTIILVTHDKKIAEHADRVVEISDGVIISDERNVSRSTTARPIREHGPSAGWRGAIDRMTEALRMAGAAIWAHKMRSLLTMLGIIIGIASVAAISALGAGSQQQILSSISSLGTNTIEVRAGKGFGDLEAGKIRTLVPADAEALVNQPYVDSVTPTVTTSVTVKRAAVAVNASVTGVGADFFRVRGLELAHGQLFDAQDVIAYSQNVVIDASAARDLFPDRVNPVGQVILLGTMPARVVGVTKRENSFGPAVDTLTVYAPYTTVMGRMLGRPNVDGITVRIRDDVDPGNVEAAVTRLIERRHGAKDFFLTNSATIRETIETTTQTLTLLISSVAVISLIVGGIGVMNIMLVSVTERTKEIGVRVAVGARRSDILSQFLIEAVMVCLVGGLMGIMLALGISALFNLLSPDFKMIFSPGSIIVAFACSTLIGIVFGFLPARNAAKLDPIEALARD</sequence>